<evidence type="ECO:0000255" key="1"/>
<evidence type="ECO:0000256" key="2">
    <source>
        <dbReference type="SAM" id="MobiDB-lite"/>
    </source>
</evidence>
<evidence type="ECO:0000269" key="3">
    <source>
    </source>
</evidence>
<evidence type="ECO:0000269" key="4">
    <source>
    </source>
</evidence>
<evidence type="ECO:0000303" key="5">
    <source>
    </source>
</evidence>
<evidence type="ECO:0000303" key="6">
    <source>
    </source>
</evidence>
<evidence type="ECO:0000305" key="7"/>
<evidence type="ECO:0000312" key="8">
    <source>
        <dbReference type="EMBL" id="CZU00352.1"/>
    </source>
</evidence>
<evidence type="ECO:0000312" key="9">
    <source>
        <dbReference type="Proteomes" id="UP000001450"/>
    </source>
</evidence>
<feature type="chain" id="PRO_0000460822" description="Potassium channel K2">
    <location>
        <begin position="1"/>
        <end position="1461"/>
    </location>
</feature>
<feature type="transmembrane region" description="Helical" evidence="1">
    <location>
        <begin position="44"/>
        <end position="64"/>
    </location>
</feature>
<feature type="transmembrane region" description="Helical" evidence="1">
    <location>
        <begin position="142"/>
        <end position="162"/>
    </location>
</feature>
<feature type="transmembrane region" description="Helical" evidence="1">
    <location>
        <begin position="183"/>
        <end position="203"/>
    </location>
</feature>
<feature type="transmembrane region" description="Helical" evidence="1">
    <location>
        <begin position="218"/>
        <end position="238"/>
    </location>
</feature>
<feature type="transmembrane region" description="Helical" evidence="7">
    <location>
        <begin position="242"/>
        <end position="262"/>
    </location>
</feature>
<feature type="transmembrane region" description="Helical" evidence="1">
    <location>
        <begin position="281"/>
        <end position="301"/>
    </location>
</feature>
<feature type="intramembrane region" description="Pore-forming" evidence="7">
    <location>
        <begin position="322"/>
        <end position="340"/>
    </location>
</feature>
<feature type="transmembrane region" description="Helical" evidence="1">
    <location>
        <begin position="349"/>
        <end position="369"/>
    </location>
</feature>
<feature type="region of interest" description="Disordered" evidence="2">
    <location>
        <begin position="771"/>
        <end position="794"/>
    </location>
</feature>
<sequence>MKSGLFSMNDIFFLVNSIFKYFLILLNGSHLLKLLYSSKENIHIIEGLLCIITGVILKLSLIYIYCTYFMNIYIIKDYRRKNVLNIFNMNNNYKRNGNVIESDDFEYRKLIKKFFFKKVYYSIKKKHKRIELYMLKIYNSNFNYYFCNIRDMCYTIIWYISLYYWRRDTYNMIWGFNKIPTYIYNMLLILLSTSYIDLVMVIISYNKSKYYLMKSKLLIDIFFSAPCTYLFSKFIFVFEHQIDIYFMMGFLRNIKIFLNVSYVRIEHNSILTNTEIKIIRIVLGVLLLCNAFASTIYTIQAIHPYNLDNENFNYFLNSYLDYFYFSIISISTVGYGDIFPINKLSKVVCIIFIFWTFIWVPIQFNDLIISIFSKKKTYGKISMNNQKFILLIGDVEPQQLNVFLFESVAQGNKLKFHLLTTYPINIYDEQIKIADHFCISLYIKNFDLNEKENINLLYSINAQNAYYLFLFSNKFHNGHYNIDTKSFTRLLILKKFLHGKKNAVIELRSNCVSNIVRSIGCENFIIVNLKHSLIVKNIKYPGFITLILNLFTAYNYDISSYNFNDIASYPSLKYIGEFNRGSRTKIFSFIVHKNMVGLIFDKLFYKLYESLGIILVGIETNTTNYYINNKKHKNKNSYVDDNFTTMRKNNMKNKKKKSFKFIYLHLLKKYGHTNHYTQKKKKKKYDNIINHHGSKSKMEYSTQLRHNNKTIKIYDEYNTIETYQNYLNYETINNSRINIYNSDEKKKKYNDVSPTNNILTNYKNGKLHIEKRDDFDNNNNNNNNNIVKSRKKGRENKNDEIINVCININSDIKKKYNNNNNNNNNNDNDNNNIINDHDNYNIYNNLNSNLKCRCLPNTKKNKAQNVNNVTNNKDNDVSVKRIKTHLQDDNTIDNKKELKCYLNLLGKNYAIRDSDKCVVIANSRKVIKYLSKAKSLFWIFEIKSKKKDNISYDLKSVIKTKQTFNKYFTTNIKKKLPTTSIQNNVYVNKNAHIIAMNYHDLFNTYRISRIFTKNNYNYKRKNSRKKHLFRNLNGEFNETKLYHHCNNTHNIKTTDKKNMEKLDKLYFSTKLNSKSNTNIHIHNNNNNNNNNNEHYDDEIKTYYFNLTEKNSHLLLNYKKQLKKKNYINTCYSVNKSDESINKIKNMNSDNNNINSNNINSNINNNNNNNTKLNHTLKNRITFSYMEACEKYFPTENRNNKLLLIINCTCNIIQLIKMFNNKYKYNVIILTDEIPTMNIMDLFKYNVVFIKCKILDDYNLINSGLMNAEYILILPTEAKNINEINEIDMNTIIVTRKITHLLKKKKRTYYINNIITELINPSNVIFLEENKMIKLKDKKSSYDDFFPYVNSSQFYSSNIICETMLYNFMTHHKSFTDFSVCTNTLECLIKFLRIIYICDLSKYYDFSFKKIKTFRDLFYFLSKKNIITIGLYRKGDKKVPFYIYTKPNENCLLRFDDIVYIL</sequence>
<comment type="function">
    <text evidence="4">Contributes to transmembrane potassium transport.</text>
</comment>
<comment type="subunit">
    <text evidence="3">May form oligomers or interact with other proteins.</text>
</comment>
<comment type="subcellular location">
    <subcellularLocation>
        <location evidence="4">Membrane</location>
        <topology evidence="1">Multi-pass membrane protein</topology>
    </subcellularLocation>
</comment>
<comment type="developmental stage">
    <text evidence="3">Expressed in late schizont and merozoite stage parasites.</text>
</comment>
<comment type="disruption phenotype">
    <text evidence="3">Repeated attempts to generate a knockout failed.</text>
</comment>
<comment type="miscellaneous">
    <text evidence="4">In the Saccharomyces cerevisiae heterologous expression system, localizes to the intracellular membranes of the yeast cells.</text>
</comment>
<dbReference type="EMBL" id="LN999946">
    <property type="protein sequence ID" value="CZU00352.1"/>
    <property type="molecule type" value="Genomic_DNA"/>
</dbReference>
<dbReference type="RefSeq" id="XP_001348796.2">
    <property type="nucleotide sequence ID" value="XM_001348760.2"/>
</dbReference>
<dbReference type="STRING" id="36329.Q8IKI3"/>
<dbReference type="TCDB" id="1.A.1.26.4">
    <property type="family name" value="the voltage-gated ion channel (vic) superfamily"/>
</dbReference>
<dbReference type="PaxDb" id="5833-PF14_0622"/>
<dbReference type="EnsemblProtists" id="CZU00352">
    <property type="protein sequence ID" value="CZU00352"/>
    <property type="gene ID" value="PF3D7_1465500"/>
</dbReference>
<dbReference type="GeneID" id="812204"/>
<dbReference type="KEGG" id="pfa:PF3D7_1465500"/>
<dbReference type="VEuPathDB" id="PlasmoDB:PF3D7_1465500"/>
<dbReference type="HOGENOM" id="CLU_251134_0_0_1"/>
<dbReference type="InParanoid" id="Q8IKI3"/>
<dbReference type="OMA" id="WLFEIKS"/>
<dbReference type="OrthoDB" id="10035564at2759"/>
<dbReference type="PhylomeDB" id="Q8IKI3"/>
<dbReference type="Reactome" id="R-PFA-1300642">
    <property type="pathway name" value="Sperm Motility And Taxes"/>
</dbReference>
<dbReference type="Proteomes" id="UP000001450">
    <property type="component" value="Chromosome 14"/>
</dbReference>
<dbReference type="GO" id="GO:0016020">
    <property type="term" value="C:membrane"/>
    <property type="evidence" value="ECO:0000318"/>
    <property type="project" value="GO_Central"/>
</dbReference>
<dbReference type="GO" id="GO:0005886">
    <property type="term" value="C:plasma membrane"/>
    <property type="evidence" value="ECO:0000314"/>
    <property type="project" value="GeneDB"/>
</dbReference>
<dbReference type="GO" id="GO:0005267">
    <property type="term" value="F:potassium channel activity"/>
    <property type="evidence" value="ECO:0000314"/>
    <property type="project" value="GeneDB"/>
</dbReference>
<dbReference type="GO" id="GO:0071805">
    <property type="term" value="P:potassium ion transmembrane transport"/>
    <property type="evidence" value="ECO:0000318"/>
    <property type="project" value="GO_Central"/>
</dbReference>
<dbReference type="FunFam" id="1.10.287.70:FF:000147">
    <property type="entry name" value="Potassium channel, putative"/>
    <property type="match status" value="1"/>
</dbReference>
<dbReference type="Gene3D" id="1.10.287.70">
    <property type="match status" value="1"/>
</dbReference>
<dbReference type="InterPro" id="IPR003929">
    <property type="entry name" value="K_chnl_BK_asu"/>
</dbReference>
<dbReference type="InterPro" id="IPR013099">
    <property type="entry name" value="K_chnl_dom"/>
</dbReference>
<dbReference type="InterPro" id="IPR047871">
    <property type="entry name" value="K_chnl_Slo-like"/>
</dbReference>
<dbReference type="PANTHER" id="PTHR10027">
    <property type="entry name" value="CALCIUM-ACTIVATED POTASSIUM CHANNEL ALPHA CHAIN"/>
    <property type="match status" value="1"/>
</dbReference>
<dbReference type="PANTHER" id="PTHR10027:SF10">
    <property type="entry name" value="SLOWPOKE 2, ISOFORM D"/>
    <property type="match status" value="1"/>
</dbReference>
<dbReference type="Pfam" id="PF03493">
    <property type="entry name" value="BK_channel_a"/>
    <property type="match status" value="1"/>
</dbReference>
<dbReference type="Pfam" id="PF07885">
    <property type="entry name" value="Ion_trans_2"/>
    <property type="match status" value="1"/>
</dbReference>
<dbReference type="SUPFAM" id="SSF81324">
    <property type="entry name" value="Voltage-gated potassium channels"/>
    <property type="match status" value="1"/>
</dbReference>
<organism evidence="9">
    <name type="scientific">Plasmodium falciparum (isolate 3D7)</name>
    <dbReference type="NCBI Taxonomy" id="36329"/>
    <lineage>
        <taxon>Eukaryota</taxon>
        <taxon>Sar</taxon>
        <taxon>Alveolata</taxon>
        <taxon>Apicomplexa</taxon>
        <taxon>Aconoidasida</taxon>
        <taxon>Haemosporida</taxon>
        <taxon>Plasmodiidae</taxon>
        <taxon>Plasmodium</taxon>
        <taxon>Plasmodium (Laverania)</taxon>
    </lineage>
</organism>
<reference evidence="9" key="1">
    <citation type="journal article" date="2002" name="Nature">
        <title>Genome sequence of the human malaria parasite Plasmodium falciparum.</title>
        <authorList>
            <person name="Gardner M.J."/>
            <person name="Hall N."/>
            <person name="Fung E."/>
            <person name="White O."/>
            <person name="Berriman M."/>
            <person name="Hyman R.W."/>
            <person name="Carlton J.M."/>
            <person name="Pain A."/>
            <person name="Nelson K.E."/>
            <person name="Bowman S."/>
            <person name="Paulsen I.T."/>
            <person name="James K.D."/>
            <person name="Eisen J.A."/>
            <person name="Rutherford K.M."/>
            <person name="Salzberg S.L."/>
            <person name="Craig A."/>
            <person name="Kyes S."/>
            <person name="Chan M.-S."/>
            <person name="Nene V."/>
            <person name="Shallom S.J."/>
            <person name="Suh B."/>
            <person name="Peterson J."/>
            <person name="Angiuoli S."/>
            <person name="Pertea M."/>
            <person name="Allen J."/>
            <person name="Selengut J."/>
            <person name="Haft D."/>
            <person name="Mather M.W."/>
            <person name="Vaidya A.B."/>
            <person name="Martin D.M.A."/>
            <person name="Fairlamb A.H."/>
            <person name="Fraunholz M.J."/>
            <person name="Roos D.S."/>
            <person name="Ralph S.A."/>
            <person name="McFadden G.I."/>
            <person name="Cummings L.M."/>
            <person name="Subramanian G.M."/>
            <person name="Mungall C."/>
            <person name="Venter J.C."/>
            <person name="Carucci D.J."/>
            <person name="Hoffman S.L."/>
            <person name="Newbold C."/>
            <person name="Davis R.W."/>
            <person name="Fraser C.M."/>
            <person name="Barrell B.G."/>
        </authorList>
    </citation>
    <scope>NUCLEOTIDE SEQUENCE [LARGE SCALE GENOMIC DNA]</scope>
    <source>
        <strain evidence="9">3D7</strain>
    </source>
</reference>
<reference evidence="7" key="2">
    <citation type="journal article" date="2008" name="Malar. J.">
        <title>Characterization of two putative potassium channels in Plasmodium falciparum.</title>
        <authorList>
            <person name="Waller K.L."/>
            <person name="McBride S.M."/>
            <person name="Kim K."/>
            <person name="McDonald T.V."/>
        </authorList>
    </citation>
    <scope>SUBUNIT</scope>
    <scope>DEVELOPMENTAL STAGE</scope>
    <scope>DISRUPTION PHENOTYPE</scope>
    <source>
        <strain evidence="5">3D7</strain>
    </source>
</reference>
<reference evidence="7" key="3">
    <citation type="journal article" date="2020" name="Microb. Cell Fact.">
        <title>Purification and initial characterization of Plasmodium falciparum K+ channels, PfKch1 and PfKch2 produced in Saccharomyces cerevisiae.</title>
        <authorList>
            <person name="Molbaek K."/>
            <person name="Tejada M."/>
            <person name="Ricke C.H."/>
            <person name="Scharff-Poulsen P."/>
            <person name="Ellekvist P."/>
            <person name="Helix-Nielsen C."/>
            <person name="Kumar N."/>
            <person name="Klaerke D.A."/>
            <person name="Pedersen P.A."/>
        </authorList>
    </citation>
    <scope>FUNCTION</scope>
    <scope>SUBCELLULAR LOCATION</scope>
</reference>
<gene>
    <name evidence="7" type="primary">K2</name>
    <name evidence="9" type="ORF">PF3D7_1465500</name>
</gene>
<proteinExistence type="evidence at protein level"/>
<accession>Q8IKI3</accession>
<name>KCH2_PLAF7</name>
<keyword id="KW-0407">Ion channel</keyword>
<keyword id="KW-0406">Ion transport</keyword>
<keyword id="KW-0472">Membrane</keyword>
<keyword id="KW-0630">Potassium</keyword>
<keyword id="KW-0631">Potassium channel</keyword>
<keyword id="KW-0633">Potassium transport</keyword>
<keyword id="KW-1185">Reference proteome</keyword>
<keyword id="KW-0812">Transmembrane</keyword>
<keyword id="KW-1133">Transmembrane helix</keyword>
<keyword id="KW-0813">Transport</keyword>
<protein>
    <recommendedName>
        <fullName evidence="8">Potassium channel K2</fullName>
        <shortName evidence="5">PfK2</shortName>
        <shortName evidence="6">PfKch2</shortName>
    </recommendedName>
</protein>